<comment type="function">
    <text evidence="1">Component of the MICOS complex, a large protein complex of the mitochondrial inner membrane that plays crucial roles in the maintenance of crista junctions, inner membrane architecture, and formation of contact sites to the outer membrane. Plays a role in keeping cristae membranes connected to the inner boundary membrane. Also promotes protein import via the mitochondrial intermembrane space assembly (MIA) pathway (By similarity).</text>
</comment>
<comment type="subunit">
    <text evidence="1">Component of the mitochondrial contact site and cristae organizing system (MICOS) complex.</text>
</comment>
<comment type="subcellular location">
    <subcellularLocation>
        <location evidence="1">Mitochondrion inner membrane</location>
        <topology evidence="1">Single-pass membrane protein</topology>
    </subcellularLocation>
</comment>
<comment type="similarity">
    <text evidence="4">Belongs to the MICOS complex subunit Mic60 family.</text>
</comment>
<evidence type="ECO:0000250" key="1"/>
<evidence type="ECO:0000255" key="2"/>
<evidence type="ECO:0000256" key="3">
    <source>
        <dbReference type="SAM" id="MobiDB-lite"/>
    </source>
</evidence>
<evidence type="ECO:0000305" key="4"/>
<sequence length="684" mass="74528">MLRTSLRSVRALGSRPSAAVAGRQWQATVVRRAAVSGQRFFADDKKPVVPEPAQPAVLPASETLTAPSTPPPASPQVEPTSTIAPETTPLTPPAPEATVIPPVAEEPVVPPTLPTPRKKKGFFRRLRNFLLSLTILGAIAFGGGVYYSRINDAFHDFFTEYIPYGEQAVLYLEELDFKKRFPDVVSRVTGRPRDSGEQVKVPAQSGASWRVADGGEPAGRQSSSIKKAAVAAKDAVTKSEPAVVAGANKDTAELPKAESTTTVTPVEPVPVAVAVADPATAVAPADTAAAAAPAKKPFKAPEVDEPSRWPPASPIDPLKVNGATDPIVQDLVHMLNDIITVINHDNANEKYAPTIGKAKNELSKVAGRINEMKAKVEAEASKQVKARVDGFDKAANELVSRVESAMAAQEAAWRREFEEEMIRLKKSYDEKIHLIQDRERQIAEEKLNNRLLEQAIQLQRQFTDDIKKHVEEERDGRLGKLNELSSAVADLEKLTSGWNEVVDTNLRTQQLHVAVEAVRASLQDAHHPRPFIKELVALKEIAAEDPVVDAAISSINPTAYQRGISTSAELIDRFRRVATEVRKASLLPEDAGVASHASSYVLSKLMFKKEGLAAGDDVESILTRTQTYLEEGDLDNAAREINGLQGWAKTLSRDWLGEVRKVLEVQQALEVIQTEARLQSLRME</sequence>
<accession>D1Z5G1</accession>
<accession>F7VR83</accession>
<gene>
    <name type="primary">MIC60</name>
    <name type="ORF">SMAC_01581</name>
</gene>
<proteinExistence type="inferred from homology"/>
<keyword id="KW-0175">Coiled coil</keyword>
<keyword id="KW-0472">Membrane</keyword>
<keyword id="KW-0496">Mitochondrion</keyword>
<keyword id="KW-0999">Mitochondrion inner membrane</keyword>
<keyword id="KW-1185">Reference proteome</keyword>
<keyword id="KW-0809">Transit peptide</keyword>
<keyword id="KW-0812">Transmembrane</keyword>
<keyword id="KW-1133">Transmembrane helix</keyword>
<dbReference type="EMBL" id="CABT02000004">
    <property type="protein sequence ID" value="CCC08017.1"/>
    <property type="molecule type" value="Genomic_DNA"/>
</dbReference>
<dbReference type="RefSeq" id="XP_003352747.1">
    <property type="nucleotide sequence ID" value="XM_003352699.1"/>
</dbReference>
<dbReference type="SMR" id="D1Z5G1"/>
<dbReference type="FunCoup" id="D1Z5G1">
    <property type="interactions" value="174"/>
</dbReference>
<dbReference type="STRING" id="771870.D1Z5G1"/>
<dbReference type="GeneID" id="10810370"/>
<dbReference type="KEGG" id="smp:10810370"/>
<dbReference type="VEuPathDB" id="FungiDB:SMAC_01581"/>
<dbReference type="eggNOG" id="KOG1854">
    <property type="taxonomic scope" value="Eukaryota"/>
</dbReference>
<dbReference type="HOGENOM" id="CLU_008024_1_2_1"/>
<dbReference type="InParanoid" id="D1Z5G1"/>
<dbReference type="OMA" id="RLDHQMQ"/>
<dbReference type="OrthoDB" id="10261039at2759"/>
<dbReference type="Proteomes" id="UP000001881">
    <property type="component" value="Unassembled WGS sequence"/>
</dbReference>
<dbReference type="GO" id="GO:0061617">
    <property type="term" value="C:MICOS complex"/>
    <property type="evidence" value="ECO:0007669"/>
    <property type="project" value="TreeGrafter"/>
</dbReference>
<dbReference type="GO" id="GO:0042407">
    <property type="term" value="P:cristae formation"/>
    <property type="evidence" value="ECO:0007669"/>
    <property type="project" value="TreeGrafter"/>
</dbReference>
<dbReference type="InterPro" id="IPR019133">
    <property type="entry name" value="MIC60"/>
</dbReference>
<dbReference type="PANTHER" id="PTHR15415:SF7">
    <property type="entry name" value="MICOS COMPLEX SUBUNIT MIC60"/>
    <property type="match status" value="1"/>
</dbReference>
<dbReference type="PANTHER" id="PTHR15415">
    <property type="entry name" value="MITOFILIN"/>
    <property type="match status" value="1"/>
</dbReference>
<dbReference type="Pfam" id="PF09731">
    <property type="entry name" value="Mitofilin"/>
    <property type="match status" value="1"/>
</dbReference>
<protein>
    <recommendedName>
        <fullName>MICOS complex subunit MIC60</fullName>
    </recommendedName>
    <alternativeName>
        <fullName>Mitofilin</fullName>
    </alternativeName>
</protein>
<reference key="1">
    <citation type="journal article" date="2010" name="PLoS Genet.">
        <title>De novo assembly of a 40 Mb eukaryotic genome from short sequence reads: Sordaria macrospora, a model organism for fungal morphogenesis.</title>
        <authorList>
            <person name="Nowrousian M."/>
            <person name="Stajich J.E."/>
            <person name="Chu M."/>
            <person name="Engh I."/>
            <person name="Espagne E."/>
            <person name="Halliday K."/>
            <person name="Kamerewerd J."/>
            <person name="Kempken F."/>
            <person name="Knab B."/>
            <person name="Kuo H.-C."/>
            <person name="Osiewacz H.D."/>
            <person name="Poeggeler S."/>
            <person name="Read N.D."/>
            <person name="Seiler S."/>
            <person name="Smith K.M."/>
            <person name="Zickler D."/>
            <person name="Kueck U."/>
            <person name="Freitag M."/>
        </authorList>
    </citation>
    <scope>NUCLEOTIDE SEQUENCE [LARGE SCALE GENOMIC DNA]</scope>
    <source>
        <strain>ATCC MYA-333 / DSM 997 / K(L3346) / K-hell</strain>
    </source>
</reference>
<feature type="transit peptide" description="Mitochondrion" evidence="2">
    <location>
        <begin position="1"/>
        <end position="41"/>
    </location>
</feature>
<feature type="chain" id="PRO_0000406674" description="MICOS complex subunit MIC60">
    <location>
        <begin position="42"/>
        <end position="684"/>
    </location>
</feature>
<feature type="topological domain" description="Mitochondrial matrix" evidence="2">
    <location>
        <begin position="42"/>
        <end position="125"/>
    </location>
</feature>
<feature type="transmembrane region" description="Helical" evidence="2">
    <location>
        <begin position="126"/>
        <end position="148"/>
    </location>
</feature>
<feature type="topological domain" description="Mitochondrial intermembrane" evidence="2">
    <location>
        <begin position="149"/>
        <end position="684"/>
    </location>
</feature>
<feature type="region of interest" description="Disordered" evidence="3">
    <location>
        <begin position="62"/>
        <end position="102"/>
    </location>
</feature>
<feature type="region of interest" description="Disordered" evidence="3">
    <location>
        <begin position="189"/>
        <end position="224"/>
    </location>
</feature>
<feature type="region of interest" description="Disordered" evidence="3">
    <location>
        <begin position="287"/>
        <end position="317"/>
    </location>
</feature>
<feature type="coiled-coil region" evidence="2">
    <location>
        <begin position="434"/>
        <end position="464"/>
    </location>
</feature>
<feature type="compositionally biased region" description="Low complexity" evidence="3">
    <location>
        <begin position="75"/>
        <end position="89"/>
    </location>
</feature>
<name>MIC60_SORMK</name>
<organism>
    <name type="scientific">Sordaria macrospora (strain ATCC MYA-333 / DSM 997 / K(L3346) / K-hell)</name>
    <dbReference type="NCBI Taxonomy" id="771870"/>
    <lineage>
        <taxon>Eukaryota</taxon>
        <taxon>Fungi</taxon>
        <taxon>Dikarya</taxon>
        <taxon>Ascomycota</taxon>
        <taxon>Pezizomycotina</taxon>
        <taxon>Sordariomycetes</taxon>
        <taxon>Sordariomycetidae</taxon>
        <taxon>Sordariales</taxon>
        <taxon>Sordariaceae</taxon>
        <taxon>Sordaria</taxon>
    </lineage>
</organism>